<proteinExistence type="inferred from homology"/>
<protein>
    <recommendedName>
        <fullName>Protein Turandot C</fullName>
    </recommendedName>
</protein>
<comment type="function">
    <text evidence="1">A humoral factor that may play a role in stress tolerance.</text>
</comment>
<comment type="subcellular location">
    <subcellularLocation>
        <location evidence="1">Secreted</location>
    </subcellularLocation>
</comment>
<comment type="similarity">
    <text evidence="2">Belongs to the Turandot family.</text>
</comment>
<keyword id="KW-0391">Immunity</keyword>
<keyword id="KW-0399">Innate immunity</keyword>
<keyword id="KW-1185">Reference proteome</keyword>
<keyword id="KW-0964">Secreted</keyword>
<keyword id="KW-0732">Signal</keyword>
<gene>
    <name evidence="1" type="primary">TotC</name>
    <name type="ORF">GD19383</name>
</gene>
<organism>
    <name type="scientific">Drosophila simulans</name>
    <name type="common">Fruit fly</name>
    <dbReference type="NCBI Taxonomy" id="7240"/>
    <lineage>
        <taxon>Eukaryota</taxon>
        <taxon>Metazoa</taxon>
        <taxon>Ecdysozoa</taxon>
        <taxon>Arthropoda</taxon>
        <taxon>Hexapoda</taxon>
        <taxon>Insecta</taxon>
        <taxon>Pterygota</taxon>
        <taxon>Neoptera</taxon>
        <taxon>Endopterygota</taxon>
        <taxon>Diptera</taxon>
        <taxon>Brachycera</taxon>
        <taxon>Muscomorpha</taxon>
        <taxon>Ephydroidea</taxon>
        <taxon>Drosophilidae</taxon>
        <taxon>Drosophila</taxon>
        <taxon>Sophophora</taxon>
    </lineage>
</organism>
<reference evidence="3" key="1">
    <citation type="journal article" date="2007" name="Nature">
        <title>Evolution of genes and genomes on the Drosophila phylogeny.</title>
        <authorList>
            <consortium name="Drosophila 12 genomes consortium"/>
        </authorList>
    </citation>
    <scope>NUCLEOTIDE SEQUENCE [LARGE SCALE GENOMIC DNA]</scope>
</reference>
<name>TOTC_DROSI</name>
<feature type="signal peptide" evidence="2">
    <location>
        <begin position="1"/>
        <end position="21"/>
    </location>
</feature>
<feature type="chain" id="PRO_0000354986" description="Protein Turandot C">
    <location>
        <begin position="22"/>
        <end position="129"/>
    </location>
</feature>
<accession>B4R1Q3</accession>
<evidence type="ECO:0000250" key="1">
    <source>
        <dbReference type="UniProtKB" id="Q8IN43"/>
    </source>
</evidence>
<evidence type="ECO:0000255" key="2"/>
<evidence type="ECO:0000312" key="3">
    <source>
        <dbReference type="EMBL" id="EDX12162.1"/>
    </source>
</evidence>
<dbReference type="EMBL" id="CM000364">
    <property type="protein sequence ID" value="EDX12162.1"/>
    <property type="molecule type" value="Genomic_DNA"/>
</dbReference>
<dbReference type="SMR" id="B4R1Q3"/>
<dbReference type="STRING" id="7240.B4R1Q3"/>
<dbReference type="EnsemblMetazoa" id="FBtr0219293">
    <property type="protein sequence ID" value="FBpp0217785"/>
    <property type="gene ID" value="FBgn0190884"/>
</dbReference>
<dbReference type="EnsemblMetazoa" id="XM_002102623.4">
    <property type="protein sequence ID" value="XP_002102659.1"/>
    <property type="gene ID" value="LOC6727270"/>
</dbReference>
<dbReference type="GeneID" id="6727270"/>
<dbReference type="KEGG" id="dsi:Dsimw501_GD19383"/>
<dbReference type="HOGENOM" id="CLU_152780_0_0_1"/>
<dbReference type="OMA" id="AYFFQWF"/>
<dbReference type="OrthoDB" id="7861285at2759"/>
<dbReference type="PhylomeDB" id="B4R1Q3"/>
<dbReference type="Proteomes" id="UP000000304">
    <property type="component" value="Chromosome 3R"/>
</dbReference>
<dbReference type="Bgee" id="FBgn0190884">
    <property type="expression patterns" value="Expressed in adult organism and 1 other cell type or tissue"/>
</dbReference>
<dbReference type="GO" id="GO:0005615">
    <property type="term" value="C:extracellular space"/>
    <property type="evidence" value="ECO:0000250"/>
    <property type="project" value="UniProtKB"/>
</dbReference>
<dbReference type="GO" id="GO:0034605">
    <property type="term" value="P:cellular response to heat"/>
    <property type="evidence" value="ECO:0007669"/>
    <property type="project" value="EnsemblMetazoa"/>
</dbReference>
<dbReference type="GO" id="GO:0034644">
    <property type="term" value="P:cellular response to UV"/>
    <property type="evidence" value="ECO:0007669"/>
    <property type="project" value="EnsemblMetazoa"/>
</dbReference>
<dbReference type="GO" id="GO:0045087">
    <property type="term" value="P:innate immune response"/>
    <property type="evidence" value="ECO:0007669"/>
    <property type="project" value="UniProtKB-KW"/>
</dbReference>
<dbReference type="GO" id="GO:0009617">
    <property type="term" value="P:response to bacterium"/>
    <property type="evidence" value="ECO:0007669"/>
    <property type="project" value="EnsemblMetazoa"/>
</dbReference>
<dbReference type="GO" id="GO:0009408">
    <property type="term" value="P:response to heat"/>
    <property type="evidence" value="ECO:0000250"/>
    <property type="project" value="UniProtKB"/>
</dbReference>
<dbReference type="GO" id="GO:0006979">
    <property type="term" value="P:response to oxidative stress"/>
    <property type="evidence" value="ECO:0000250"/>
    <property type="project" value="UniProtKB"/>
</dbReference>
<dbReference type="GO" id="GO:0009411">
    <property type="term" value="P:response to UV"/>
    <property type="evidence" value="ECO:0000250"/>
    <property type="project" value="UniProtKB"/>
</dbReference>
<dbReference type="InterPro" id="IPR010825">
    <property type="entry name" value="Turandot"/>
</dbReference>
<dbReference type="Pfam" id="PF07240">
    <property type="entry name" value="Turandot"/>
    <property type="match status" value="1"/>
</dbReference>
<sequence length="129" mass="14345">MNASISLLCFALLLISPFCLGYSDEERESDSLRVAEILQTSKDDESKINRTQELLDIFRRLAPSLSPEDRERIERSIKEHTDEILIDGVPSQGGRKTKYVGKILSPVAQGLAIGFFEELGGSLSRLFTG</sequence>